<organism>
    <name type="scientific">Oryza sativa subsp. japonica</name>
    <name type="common">Rice</name>
    <dbReference type="NCBI Taxonomy" id="39947"/>
    <lineage>
        <taxon>Eukaryota</taxon>
        <taxon>Viridiplantae</taxon>
        <taxon>Streptophyta</taxon>
        <taxon>Embryophyta</taxon>
        <taxon>Tracheophyta</taxon>
        <taxon>Spermatophyta</taxon>
        <taxon>Magnoliopsida</taxon>
        <taxon>Liliopsida</taxon>
        <taxon>Poales</taxon>
        <taxon>Poaceae</taxon>
        <taxon>BOP clade</taxon>
        <taxon>Oryzoideae</taxon>
        <taxon>Oryzeae</taxon>
        <taxon>Oryzinae</taxon>
        <taxon>Oryza</taxon>
        <taxon>Oryza sativa</taxon>
    </lineage>
</organism>
<feature type="transit peptide" description="Chloroplast" evidence="2">
    <location>
        <begin position="1"/>
        <end position="30"/>
    </location>
</feature>
<feature type="chain" id="PRO_0000417594" description="Probable 1-deoxy-D-xylulose-5-phosphate synthase 2, chloroplastic">
    <location>
        <begin position="31"/>
        <end position="713"/>
    </location>
</feature>
<feature type="binding site" evidence="1">
    <location>
        <position position="140"/>
    </location>
    <ligand>
        <name>thiamine diphosphate</name>
        <dbReference type="ChEBI" id="CHEBI:58937"/>
    </ligand>
</feature>
<feature type="binding site" evidence="1">
    <location>
        <begin position="181"/>
        <end position="183"/>
    </location>
    <ligand>
        <name>thiamine diphosphate</name>
        <dbReference type="ChEBI" id="CHEBI:58937"/>
    </ligand>
</feature>
<feature type="binding site" evidence="1">
    <location>
        <position position="212"/>
    </location>
    <ligand>
        <name>Mg(2+)</name>
        <dbReference type="ChEBI" id="CHEBI:18420"/>
    </ligand>
</feature>
<feature type="binding site" evidence="1">
    <location>
        <begin position="213"/>
        <end position="214"/>
    </location>
    <ligand>
        <name>thiamine diphosphate</name>
        <dbReference type="ChEBI" id="CHEBI:58937"/>
    </ligand>
</feature>
<feature type="binding site" evidence="1">
    <location>
        <position position="241"/>
    </location>
    <ligand>
        <name>Mg(2+)</name>
        <dbReference type="ChEBI" id="CHEBI:18420"/>
    </ligand>
</feature>
<feature type="binding site" evidence="1">
    <location>
        <position position="241"/>
    </location>
    <ligand>
        <name>thiamine diphosphate</name>
        <dbReference type="ChEBI" id="CHEBI:58937"/>
    </ligand>
</feature>
<feature type="binding site" evidence="1">
    <location>
        <position position="362"/>
    </location>
    <ligand>
        <name>thiamine diphosphate</name>
        <dbReference type="ChEBI" id="CHEBI:58937"/>
    </ligand>
</feature>
<feature type="binding site" evidence="1">
    <location>
        <position position="444"/>
    </location>
    <ligand>
        <name>thiamine diphosphate</name>
        <dbReference type="ChEBI" id="CHEBI:58937"/>
    </ligand>
</feature>
<keyword id="KW-0150">Chloroplast</keyword>
<keyword id="KW-0414">Isoprene biosynthesis</keyword>
<keyword id="KW-0460">Magnesium</keyword>
<keyword id="KW-0479">Metal-binding</keyword>
<keyword id="KW-0934">Plastid</keyword>
<keyword id="KW-1185">Reference proteome</keyword>
<keyword id="KW-0784">Thiamine biosynthesis</keyword>
<keyword id="KW-0786">Thiamine pyrophosphate</keyword>
<keyword id="KW-0808">Transferase</keyword>
<keyword id="KW-0809">Transit peptide</keyword>
<proteinExistence type="evidence at transcript level"/>
<evidence type="ECO:0000250" key="1"/>
<evidence type="ECO:0000255" key="2"/>
<evidence type="ECO:0000305" key="3"/>
<accession>Q6YU51</accession>
<accession>A0A0N7KN22</accession>
<dbReference type="EC" id="2.2.1.7"/>
<dbReference type="EMBL" id="AP005173">
    <property type="protein sequence ID" value="BAD31023.1"/>
    <property type="molecule type" value="Genomic_DNA"/>
</dbReference>
<dbReference type="EMBL" id="AP005877">
    <property type="protein sequence ID" value="BAC84616.1"/>
    <property type="molecule type" value="Genomic_DNA"/>
</dbReference>
<dbReference type="EMBL" id="AP008213">
    <property type="protein sequence ID" value="BAF21000.1"/>
    <property type="molecule type" value="Genomic_DNA"/>
</dbReference>
<dbReference type="EMBL" id="AP014963">
    <property type="protein sequence ID" value="BAT00410.1"/>
    <property type="molecule type" value="Genomic_DNA"/>
</dbReference>
<dbReference type="EMBL" id="CM000144">
    <property type="protein sequence ID" value="EEE66718.1"/>
    <property type="molecule type" value="Genomic_DNA"/>
</dbReference>
<dbReference type="EMBL" id="AK100909">
    <property type="protein sequence ID" value="BAG94824.1"/>
    <property type="molecule type" value="mRNA"/>
</dbReference>
<dbReference type="RefSeq" id="XP_015647944.1">
    <property type="nucleotide sequence ID" value="XM_015792458.1"/>
</dbReference>
<dbReference type="SMR" id="Q6YU51"/>
<dbReference type="FunCoup" id="Q6YU51">
    <property type="interactions" value="28"/>
</dbReference>
<dbReference type="STRING" id="39947.Q6YU51"/>
<dbReference type="PaxDb" id="39947-Q6YU51"/>
<dbReference type="EnsemblPlants" id="Os07t0190000-01">
    <property type="protein sequence ID" value="Os07t0190000-01"/>
    <property type="gene ID" value="Os07g0190000"/>
</dbReference>
<dbReference type="Gramene" id="Os07t0190000-01">
    <property type="protein sequence ID" value="Os07t0190000-01"/>
    <property type="gene ID" value="Os07g0190000"/>
</dbReference>
<dbReference type="KEGG" id="dosa:Os07g0190000"/>
<dbReference type="eggNOG" id="KOG0523">
    <property type="taxonomic scope" value="Eukaryota"/>
</dbReference>
<dbReference type="HOGENOM" id="CLU_009227_1_4_1"/>
<dbReference type="InParanoid" id="Q6YU51"/>
<dbReference type="OMA" id="FAPQGMF"/>
<dbReference type="OrthoDB" id="10266385at2759"/>
<dbReference type="PlantReactome" id="R-OSA-1119464">
    <property type="pathway name" value="Methylerythritol phosphate pathway"/>
</dbReference>
<dbReference type="PlantReactome" id="R-OSA-1119594">
    <property type="pathway name" value="Pyridoxal 5'-phosphate biosynthesis"/>
</dbReference>
<dbReference type="PlantReactome" id="R-OSA-1119629">
    <property type="pathway name" value="Thiamine biosynthesis"/>
</dbReference>
<dbReference type="UniPathway" id="UPA00064">
    <property type="reaction ID" value="UER00091"/>
</dbReference>
<dbReference type="Proteomes" id="UP000000763">
    <property type="component" value="Chromosome 7"/>
</dbReference>
<dbReference type="Proteomes" id="UP000007752">
    <property type="component" value="Chromosome 7"/>
</dbReference>
<dbReference type="Proteomes" id="UP000059680">
    <property type="component" value="Chromosome 7"/>
</dbReference>
<dbReference type="GO" id="GO:0009507">
    <property type="term" value="C:chloroplast"/>
    <property type="evidence" value="ECO:0007669"/>
    <property type="project" value="UniProtKB-SubCell"/>
</dbReference>
<dbReference type="GO" id="GO:0008661">
    <property type="term" value="F:1-deoxy-D-xylulose-5-phosphate synthase activity"/>
    <property type="evidence" value="ECO:0007669"/>
    <property type="project" value="UniProtKB-EC"/>
</dbReference>
<dbReference type="GO" id="GO:0046872">
    <property type="term" value="F:metal ion binding"/>
    <property type="evidence" value="ECO:0007669"/>
    <property type="project" value="UniProtKB-KW"/>
</dbReference>
<dbReference type="GO" id="GO:0016744">
    <property type="term" value="F:transketolase or transaldolase activity"/>
    <property type="evidence" value="ECO:0000318"/>
    <property type="project" value="GO_Central"/>
</dbReference>
<dbReference type="GO" id="GO:0052865">
    <property type="term" value="P:1-deoxy-D-xylulose 5-phosphate biosynthetic process"/>
    <property type="evidence" value="ECO:0007669"/>
    <property type="project" value="UniProtKB-UniPathway"/>
</dbReference>
<dbReference type="GO" id="GO:0019682">
    <property type="term" value="P:glyceraldehyde-3-phosphate metabolic process"/>
    <property type="evidence" value="ECO:0007669"/>
    <property type="project" value="UniProtKB-ARBA"/>
</dbReference>
<dbReference type="GO" id="GO:0016114">
    <property type="term" value="P:terpenoid biosynthetic process"/>
    <property type="evidence" value="ECO:0007669"/>
    <property type="project" value="InterPro"/>
</dbReference>
<dbReference type="GO" id="GO:0009228">
    <property type="term" value="P:thiamine biosynthetic process"/>
    <property type="evidence" value="ECO:0007669"/>
    <property type="project" value="UniProtKB-KW"/>
</dbReference>
<dbReference type="CDD" id="cd02007">
    <property type="entry name" value="TPP_DXS"/>
    <property type="match status" value="1"/>
</dbReference>
<dbReference type="CDD" id="cd07033">
    <property type="entry name" value="TPP_PYR_DXS_TK_like"/>
    <property type="match status" value="1"/>
</dbReference>
<dbReference type="FunFam" id="3.40.50.920:FF:000002">
    <property type="entry name" value="1-deoxy-D-xylulose-5-phosphate synthase"/>
    <property type="match status" value="1"/>
</dbReference>
<dbReference type="FunFam" id="3.40.50.970:FF:000005">
    <property type="entry name" value="1-deoxy-D-xylulose-5-phosphate synthase"/>
    <property type="match status" value="1"/>
</dbReference>
<dbReference type="Gene3D" id="3.40.50.920">
    <property type="match status" value="1"/>
</dbReference>
<dbReference type="Gene3D" id="3.40.50.970">
    <property type="match status" value="2"/>
</dbReference>
<dbReference type="HAMAP" id="MF_00315">
    <property type="entry name" value="DXP_synth"/>
    <property type="match status" value="1"/>
</dbReference>
<dbReference type="InterPro" id="IPR005477">
    <property type="entry name" value="Dxylulose-5-P_synthase"/>
</dbReference>
<dbReference type="InterPro" id="IPR029061">
    <property type="entry name" value="THDP-binding"/>
</dbReference>
<dbReference type="InterPro" id="IPR009014">
    <property type="entry name" value="Transketo_C/PFOR_II"/>
</dbReference>
<dbReference type="InterPro" id="IPR005475">
    <property type="entry name" value="Transketolase-like_Pyr-bd"/>
</dbReference>
<dbReference type="InterPro" id="IPR020826">
    <property type="entry name" value="Transketolase_BS"/>
</dbReference>
<dbReference type="InterPro" id="IPR033248">
    <property type="entry name" value="Transketolase_C"/>
</dbReference>
<dbReference type="InterPro" id="IPR049557">
    <property type="entry name" value="Transketolase_CS"/>
</dbReference>
<dbReference type="NCBIfam" id="TIGR00204">
    <property type="entry name" value="dxs"/>
    <property type="match status" value="1"/>
</dbReference>
<dbReference type="NCBIfam" id="NF003933">
    <property type="entry name" value="PRK05444.2-2"/>
    <property type="match status" value="1"/>
</dbReference>
<dbReference type="PANTHER" id="PTHR43322">
    <property type="entry name" value="1-D-DEOXYXYLULOSE 5-PHOSPHATE SYNTHASE-RELATED"/>
    <property type="match status" value="1"/>
</dbReference>
<dbReference type="PANTHER" id="PTHR43322:SF4">
    <property type="entry name" value="1-DEOXY-D-XYLULOSE-5-PHOSPHATE SYNTHASE 2, CHLOROPLASTIC-RELATED"/>
    <property type="match status" value="1"/>
</dbReference>
<dbReference type="Pfam" id="PF13292">
    <property type="entry name" value="DXP_synthase_N"/>
    <property type="match status" value="1"/>
</dbReference>
<dbReference type="Pfam" id="PF02779">
    <property type="entry name" value="Transket_pyr"/>
    <property type="match status" value="1"/>
</dbReference>
<dbReference type="Pfam" id="PF02780">
    <property type="entry name" value="Transketolase_C"/>
    <property type="match status" value="1"/>
</dbReference>
<dbReference type="SMART" id="SM00861">
    <property type="entry name" value="Transket_pyr"/>
    <property type="match status" value="1"/>
</dbReference>
<dbReference type="SUPFAM" id="SSF52518">
    <property type="entry name" value="Thiamin diphosphate-binding fold (THDP-binding)"/>
    <property type="match status" value="2"/>
</dbReference>
<dbReference type="SUPFAM" id="SSF52922">
    <property type="entry name" value="TK C-terminal domain-like"/>
    <property type="match status" value="1"/>
</dbReference>
<dbReference type="PROSITE" id="PS00801">
    <property type="entry name" value="TRANSKETOLASE_1"/>
    <property type="match status" value="1"/>
</dbReference>
<dbReference type="PROSITE" id="PS00802">
    <property type="entry name" value="TRANSKETOLASE_2"/>
    <property type="match status" value="1"/>
</dbReference>
<gene>
    <name type="ordered locus">Os07g0190000</name>
    <name type="ordered locus">LOC_Os07g09190</name>
    <name type="ORF">OsJ_23394</name>
    <name type="ORF">OSJNBb0002L09.31</name>
    <name type="ORF">OSJNBb0003E08.7</name>
</gene>
<protein>
    <recommendedName>
        <fullName>Probable 1-deoxy-D-xylulose-5-phosphate synthase 2, chloroplastic</fullName>
        <shortName>1-deoxyxylulose-5-phosphate synthase</shortName>
        <shortName>DXP synthase</shortName>
        <shortName>DXPS</shortName>
        <ecNumber>2.2.1.7</ecNumber>
    </recommendedName>
</protein>
<reference key="1">
    <citation type="journal article" date="2005" name="Nature">
        <title>The map-based sequence of the rice genome.</title>
        <authorList>
            <consortium name="International rice genome sequencing project (IRGSP)"/>
        </authorList>
    </citation>
    <scope>NUCLEOTIDE SEQUENCE [LARGE SCALE GENOMIC DNA]</scope>
    <source>
        <strain>cv. Nipponbare</strain>
    </source>
</reference>
<reference key="2">
    <citation type="journal article" date="2008" name="Nucleic Acids Res.">
        <title>The rice annotation project database (RAP-DB): 2008 update.</title>
        <authorList>
            <consortium name="The rice annotation project (RAP)"/>
        </authorList>
    </citation>
    <scope>GENOME REANNOTATION</scope>
    <source>
        <strain>cv. Nipponbare</strain>
    </source>
</reference>
<reference key="3">
    <citation type="journal article" date="2013" name="Rice">
        <title>Improvement of the Oryza sativa Nipponbare reference genome using next generation sequence and optical map data.</title>
        <authorList>
            <person name="Kawahara Y."/>
            <person name="de la Bastide M."/>
            <person name="Hamilton J.P."/>
            <person name="Kanamori H."/>
            <person name="McCombie W.R."/>
            <person name="Ouyang S."/>
            <person name="Schwartz D.C."/>
            <person name="Tanaka T."/>
            <person name="Wu J."/>
            <person name="Zhou S."/>
            <person name="Childs K.L."/>
            <person name="Davidson R.M."/>
            <person name="Lin H."/>
            <person name="Quesada-Ocampo L."/>
            <person name="Vaillancourt B."/>
            <person name="Sakai H."/>
            <person name="Lee S.S."/>
            <person name="Kim J."/>
            <person name="Numa H."/>
            <person name="Itoh T."/>
            <person name="Buell C.R."/>
            <person name="Matsumoto T."/>
        </authorList>
    </citation>
    <scope>GENOME REANNOTATION</scope>
    <source>
        <strain>cv. Nipponbare</strain>
    </source>
</reference>
<reference key="4">
    <citation type="journal article" date="2005" name="PLoS Biol.">
        <title>The genomes of Oryza sativa: a history of duplications.</title>
        <authorList>
            <person name="Yu J."/>
            <person name="Wang J."/>
            <person name="Lin W."/>
            <person name="Li S."/>
            <person name="Li H."/>
            <person name="Zhou J."/>
            <person name="Ni P."/>
            <person name="Dong W."/>
            <person name="Hu S."/>
            <person name="Zeng C."/>
            <person name="Zhang J."/>
            <person name="Zhang Y."/>
            <person name="Li R."/>
            <person name="Xu Z."/>
            <person name="Li S."/>
            <person name="Li X."/>
            <person name="Zheng H."/>
            <person name="Cong L."/>
            <person name="Lin L."/>
            <person name="Yin J."/>
            <person name="Geng J."/>
            <person name="Li G."/>
            <person name="Shi J."/>
            <person name="Liu J."/>
            <person name="Lv H."/>
            <person name="Li J."/>
            <person name="Wang J."/>
            <person name="Deng Y."/>
            <person name="Ran L."/>
            <person name="Shi X."/>
            <person name="Wang X."/>
            <person name="Wu Q."/>
            <person name="Li C."/>
            <person name="Ren X."/>
            <person name="Wang J."/>
            <person name="Wang X."/>
            <person name="Li D."/>
            <person name="Liu D."/>
            <person name="Zhang X."/>
            <person name="Ji Z."/>
            <person name="Zhao W."/>
            <person name="Sun Y."/>
            <person name="Zhang Z."/>
            <person name="Bao J."/>
            <person name="Han Y."/>
            <person name="Dong L."/>
            <person name="Ji J."/>
            <person name="Chen P."/>
            <person name="Wu S."/>
            <person name="Liu J."/>
            <person name="Xiao Y."/>
            <person name="Bu D."/>
            <person name="Tan J."/>
            <person name="Yang L."/>
            <person name="Ye C."/>
            <person name="Zhang J."/>
            <person name="Xu J."/>
            <person name="Zhou Y."/>
            <person name="Yu Y."/>
            <person name="Zhang B."/>
            <person name="Zhuang S."/>
            <person name="Wei H."/>
            <person name="Liu B."/>
            <person name="Lei M."/>
            <person name="Yu H."/>
            <person name="Li Y."/>
            <person name="Xu H."/>
            <person name="Wei S."/>
            <person name="He X."/>
            <person name="Fang L."/>
            <person name="Zhang Z."/>
            <person name="Zhang Y."/>
            <person name="Huang X."/>
            <person name="Su Z."/>
            <person name="Tong W."/>
            <person name="Li J."/>
            <person name="Tong Z."/>
            <person name="Li S."/>
            <person name="Ye J."/>
            <person name="Wang L."/>
            <person name="Fang L."/>
            <person name="Lei T."/>
            <person name="Chen C.-S."/>
            <person name="Chen H.-C."/>
            <person name="Xu Z."/>
            <person name="Li H."/>
            <person name="Huang H."/>
            <person name="Zhang F."/>
            <person name="Xu H."/>
            <person name="Li N."/>
            <person name="Zhao C."/>
            <person name="Li S."/>
            <person name="Dong L."/>
            <person name="Huang Y."/>
            <person name="Li L."/>
            <person name="Xi Y."/>
            <person name="Qi Q."/>
            <person name="Li W."/>
            <person name="Zhang B."/>
            <person name="Hu W."/>
            <person name="Zhang Y."/>
            <person name="Tian X."/>
            <person name="Jiao Y."/>
            <person name="Liang X."/>
            <person name="Jin J."/>
            <person name="Gao L."/>
            <person name="Zheng W."/>
            <person name="Hao B."/>
            <person name="Liu S.-M."/>
            <person name="Wang W."/>
            <person name="Yuan L."/>
            <person name="Cao M."/>
            <person name="McDermott J."/>
            <person name="Samudrala R."/>
            <person name="Wang J."/>
            <person name="Wong G.K.-S."/>
            <person name="Yang H."/>
        </authorList>
    </citation>
    <scope>NUCLEOTIDE SEQUENCE [LARGE SCALE GENOMIC DNA]</scope>
    <source>
        <strain>cv. Nipponbare</strain>
    </source>
</reference>
<reference key="5">
    <citation type="journal article" date="2003" name="Science">
        <title>Collection, mapping, and annotation of over 28,000 cDNA clones from japonica rice.</title>
        <authorList>
            <consortium name="The rice full-length cDNA consortium"/>
        </authorList>
    </citation>
    <scope>NUCLEOTIDE SEQUENCE [LARGE SCALE MRNA]</scope>
    <source>
        <strain>cv. Nipponbare</strain>
    </source>
</reference>
<name>DXS2_ORYSJ</name>
<sequence>MALQASSSPSMFRAIPTNTNASCRRKLQVRASAAAAAANGGGDGKVMMRKEAASGAWKIDYSGEKPATPLLDTVNYPVHMKNLSTPELEQLAAELRAEIVHTVSKTGGHLSSSLGVVELAVALHHVFDTPEDKIIWDVGHQAYPHKILTGRRSRMHTIRQTSGLAGFPKRDESAHDAFGAGHSSTSISAALGMAVARDLLGKKNHVISVIGDGAMTAGQAYEAMNNSGYLDSNMIVVLNDNKQVSLPTATLDGPATPVGALSKALTKLQSSTKLRRLREAAKTVTKQIGGQAHEVAAKVDEYARGMVSASGSTLFEELGLYYIGPVDGHSVDDLVAIFNKVKSMPAPGPVLVHIVTEKGKGYPPAEAAADRMHGVVKFDPTTGRQFKSKCSTLSYTQYFAEALIREAEADDKVVGIHAAMGGGTGLNYFHKRFPERCFDVGIAEQHAVTFAAGLAAEGLKPFCAIYSSFLQRGYDQVVHDVDLQRLPVRFAMDRAGLVGADGPTHCGAFDVAYMACLPNMVVMAPADEAELMHMVATAAAIDDRPSCFRFPRGNGIGAVLPPNHKGTPLEVGKGRVLVGGNRVALLGYGTMVQACMKAAEALKEHGIYVTVADARFCKPLDTGLIRELAAEHEVLVTVEEGSIGGFGSHVAHYLSLSGLLDGPLKLRSMFLPDRYIDHGAPVDQLEEAGLTPRHIAATVLSLLGRPLEALQLS</sequence>
<comment type="function">
    <text evidence="1">Catalyzes the acyloin condensation reaction between C atoms 2 and 3 of pyruvate and glyceraldehyde 3-phosphate to yield 1-deoxy-D-xylulose-5-phosphate (DXP). Is a limiting enzyme for plastidic isoprenoid biosynthesis and essential for chloroplast development (By similarity).</text>
</comment>
<comment type="catalytic activity">
    <reaction>
        <text>D-glyceraldehyde 3-phosphate + pyruvate + H(+) = 1-deoxy-D-xylulose 5-phosphate + CO2</text>
        <dbReference type="Rhea" id="RHEA:12605"/>
        <dbReference type="ChEBI" id="CHEBI:15361"/>
        <dbReference type="ChEBI" id="CHEBI:15378"/>
        <dbReference type="ChEBI" id="CHEBI:16526"/>
        <dbReference type="ChEBI" id="CHEBI:57792"/>
        <dbReference type="ChEBI" id="CHEBI:59776"/>
        <dbReference type="EC" id="2.2.1.7"/>
    </reaction>
</comment>
<comment type="cofactor">
    <cofactor evidence="1">
        <name>Mg(2+)</name>
        <dbReference type="ChEBI" id="CHEBI:18420"/>
    </cofactor>
    <text evidence="1">Binds 1 Mg(2+) ion per subunit.</text>
</comment>
<comment type="cofactor">
    <cofactor evidence="1">
        <name>thiamine diphosphate</name>
        <dbReference type="ChEBI" id="CHEBI:58937"/>
    </cofactor>
    <text evidence="1">Binds 1 thiamine pyrophosphate per subunit.</text>
</comment>
<comment type="pathway">
    <text>Metabolic intermediate biosynthesis; 1-deoxy-D-xylulose 5-phosphate biosynthesis; 1-deoxy-D-xylulose 5-phosphate from D-glyceraldehyde 3-phosphate and pyruvate: step 1/1.</text>
</comment>
<comment type="subunit">
    <text evidence="1">Homodimer.</text>
</comment>
<comment type="subcellular location">
    <subcellularLocation>
        <location evidence="1">Plastid</location>
        <location evidence="1">Chloroplast</location>
    </subcellularLocation>
</comment>
<comment type="similarity">
    <text evidence="3">Belongs to the transketolase family. DXPS subfamily.</text>
</comment>